<gene>
    <name type="primary">AMZ2</name>
    <name type="ORF">QtsA-18820</name>
</gene>
<organism>
    <name type="scientific">Macaca fascicularis</name>
    <name type="common">Crab-eating macaque</name>
    <name type="synonym">Cynomolgus monkey</name>
    <dbReference type="NCBI Taxonomy" id="9541"/>
    <lineage>
        <taxon>Eukaryota</taxon>
        <taxon>Metazoa</taxon>
        <taxon>Chordata</taxon>
        <taxon>Craniata</taxon>
        <taxon>Vertebrata</taxon>
        <taxon>Euteleostomi</taxon>
        <taxon>Mammalia</taxon>
        <taxon>Eutheria</taxon>
        <taxon>Euarchontoglires</taxon>
        <taxon>Primates</taxon>
        <taxon>Haplorrhini</taxon>
        <taxon>Catarrhini</taxon>
        <taxon>Cercopithecidae</taxon>
        <taxon>Cercopithecinae</taxon>
        <taxon>Macaca</taxon>
    </lineage>
</organism>
<accession>Q4R684</accession>
<keyword id="KW-0378">Hydrolase</keyword>
<keyword id="KW-0479">Metal-binding</keyword>
<keyword id="KW-0482">Metalloprotease</keyword>
<keyword id="KW-0645">Protease</keyword>
<keyword id="KW-1185">Reference proteome</keyword>
<keyword id="KW-0862">Zinc</keyword>
<reference key="1">
    <citation type="submission" date="2005-06" db="EMBL/GenBank/DDBJ databases">
        <title>DNA sequences of macaque genes expressed in brain or testis and its evolutionary implications.</title>
        <authorList>
            <consortium name="International consortium for macaque cDNA sequencing and analysis"/>
        </authorList>
    </citation>
    <scope>NUCLEOTIDE SEQUENCE [LARGE SCALE MRNA]</scope>
    <source>
        <tissue>Testis</tissue>
    </source>
</reference>
<sequence length="360" mass="41169">MQIIRHSEQTLKTALISKNPVLVSQYEKLDAGEQRLMNEAFQPASDLFGPITLHSPSDWITSHPEAPQDFEQFFSDPYRKTPSPDKRSVYIQAIGSLGNTRIISEEYIKWLTGYCKAYFYGLRVKLLEPVPVSATRCSFRVNENTQNLQIHAGDILKFLKKKKPEDAFCIVGITMIDLYPRDSWNFVFGQASLTDGVGIFSFARYGSDFYSMRYEGKVKKLKKTSSSDYSIFNNYYIPEITSVLLLRSCKTLTHEIGHIFGLRHCQWLACLMQGSNHLEESDRRPLNLCPICLRKLQCAVGFSIVERYKALVRWIDDESSGTPGATPEHSREGNGNLPKPVEAFKEWKEWIIKCLAVLQK</sequence>
<comment type="function">
    <text evidence="1">Probable zinc metalloprotease.</text>
</comment>
<comment type="cofactor">
    <cofactor evidence="1">
        <name>Zn(2+)</name>
        <dbReference type="ChEBI" id="CHEBI:29105"/>
    </cofactor>
    <text evidence="1">Binds 2 Zn(2+) ions per subunit. One is catalytic, whereas the other seems to have a structural role.</text>
</comment>
<comment type="similarity">
    <text evidence="3">Belongs to the peptidase M54 family.</text>
</comment>
<comment type="sequence caution" evidence="3">
    <conflict type="erroneous termination">
        <sequence resource="EMBL-CDS" id="BAE01391"/>
    </conflict>
    <text>Truncated C-terminus.</text>
</comment>
<evidence type="ECO:0000250" key="1">
    <source>
        <dbReference type="UniProtKB" id="Q8TXW1"/>
    </source>
</evidence>
<evidence type="ECO:0000255" key="2">
    <source>
        <dbReference type="PROSITE-ProRule" id="PRU10095"/>
    </source>
</evidence>
<evidence type="ECO:0000305" key="3"/>
<dbReference type="EC" id="3.4.-.-" evidence="1"/>
<dbReference type="EMBL" id="AB169305">
    <property type="protein sequence ID" value="BAE01391.1"/>
    <property type="status" value="ALT_SEQ"/>
    <property type="molecule type" value="mRNA"/>
</dbReference>
<dbReference type="SMR" id="Q4R684"/>
<dbReference type="MEROPS" id="M54.002"/>
<dbReference type="eggNOG" id="ENOG502QVTZ">
    <property type="taxonomic scope" value="Eukaryota"/>
</dbReference>
<dbReference type="Proteomes" id="UP000233100">
    <property type="component" value="Unplaced"/>
</dbReference>
<dbReference type="GO" id="GO:0046872">
    <property type="term" value="F:metal ion binding"/>
    <property type="evidence" value="ECO:0007669"/>
    <property type="project" value="UniProtKB-KW"/>
</dbReference>
<dbReference type="GO" id="GO:0008237">
    <property type="term" value="F:metallopeptidase activity"/>
    <property type="evidence" value="ECO:0007669"/>
    <property type="project" value="UniProtKB-KW"/>
</dbReference>
<dbReference type="GO" id="GO:0006508">
    <property type="term" value="P:proteolysis"/>
    <property type="evidence" value="ECO:0007669"/>
    <property type="project" value="UniProtKB-KW"/>
</dbReference>
<dbReference type="CDD" id="cd11375">
    <property type="entry name" value="Peptidase_M54"/>
    <property type="match status" value="1"/>
</dbReference>
<dbReference type="Gene3D" id="3.40.390.10">
    <property type="entry name" value="Collagenase (Catalytic Domain)"/>
    <property type="match status" value="1"/>
</dbReference>
<dbReference type="InterPro" id="IPR052009">
    <property type="entry name" value="Archaemetzincin"/>
</dbReference>
<dbReference type="InterPro" id="IPR024079">
    <property type="entry name" value="MetalloPept_cat_dom_sf"/>
</dbReference>
<dbReference type="InterPro" id="IPR012962">
    <property type="entry name" value="Pept_M54_archaemetzincn"/>
</dbReference>
<dbReference type="PANTHER" id="PTHR32205:SF5">
    <property type="entry name" value="ARCHAEMETZINCIN-2"/>
    <property type="match status" value="1"/>
</dbReference>
<dbReference type="PANTHER" id="PTHR32205">
    <property type="entry name" value="ARCHAEMETZINCIN-2-RELATED"/>
    <property type="match status" value="1"/>
</dbReference>
<dbReference type="Pfam" id="PF07998">
    <property type="entry name" value="Peptidase_M54"/>
    <property type="match status" value="1"/>
</dbReference>
<dbReference type="SUPFAM" id="SSF55486">
    <property type="entry name" value="Metalloproteases ('zincins'), catalytic domain"/>
    <property type="match status" value="1"/>
</dbReference>
<dbReference type="PROSITE" id="PS00142">
    <property type="entry name" value="ZINC_PROTEASE"/>
    <property type="match status" value="1"/>
</dbReference>
<name>AMZ2_MACFA</name>
<feature type="chain" id="PRO_0000159618" description="Archaemetzincin-2">
    <location>
        <begin position="1"/>
        <end position="360"/>
    </location>
</feature>
<feature type="active site" description="Proton acceptor" evidence="2">
    <location>
        <position position="255"/>
    </location>
</feature>
<feature type="binding site" evidence="1">
    <location>
        <position position="254"/>
    </location>
    <ligand>
        <name>Zn(2+)</name>
        <dbReference type="ChEBI" id="CHEBI:29105"/>
        <label>1</label>
        <note>catalytic</note>
    </ligand>
</feature>
<feature type="binding site" evidence="1">
    <location>
        <position position="258"/>
    </location>
    <ligand>
        <name>Zn(2+)</name>
        <dbReference type="ChEBI" id="CHEBI:29105"/>
        <label>1</label>
        <note>catalytic</note>
    </ligand>
</feature>
<feature type="binding site" evidence="1">
    <location>
        <position position="264"/>
    </location>
    <ligand>
        <name>Zn(2+)</name>
        <dbReference type="ChEBI" id="CHEBI:29105"/>
        <label>1</label>
        <note>catalytic</note>
    </ligand>
</feature>
<feature type="binding site" evidence="1">
    <location>
        <position position="265"/>
    </location>
    <ligand>
        <name>Zn(2+)</name>
        <dbReference type="ChEBI" id="CHEBI:29105"/>
        <label>2</label>
    </ligand>
</feature>
<feature type="binding site" evidence="1">
    <location>
        <position position="270"/>
    </location>
    <ligand>
        <name>Zn(2+)</name>
        <dbReference type="ChEBI" id="CHEBI:29105"/>
        <label>2</label>
    </ligand>
</feature>
<feature type="binding site" evidence="1">
    <location>
        <position position="289"/>
    </location>
    <ligand>
        <name>Zn(2+)</name>
        <dbReference type="ChEBI" id="CHEBI:29105"/>
        <label>2</label>
    </ligand>
</feature>
<feature type="binding site" evidence="1">
    <location>
        <position position="292"/>
    </location>
    <ligand>
        <name>Zn(2+)</name>
        <dbReference type="ChEBI" id="CHEBI:29105"/>
        <label>2</label>
    </ligand>
</feature>
<protein>
    <recommendedName>
        <fullName>Archaemetzincin-2</fullName>
        <ecNumber evidence="1">3.4.-.-</ecNumber>
    </recommendedName>
    <alternativeName>
        <fullName>Archeobacterial metalloproteinase-like protein 2</fullName>
    </alternativeName>
</protein>
<proteinExistence type="evidence at transcript level"/>